<protein>
    <recommendedName>
        <fullName evidence="1">SsrA-binding protein</fullName>
    </recommendedName>
    <alternativeName>
        <fullName evidence="1">Small protein B</fullName>
    </alternativeName>
</protein>
<proteinExistence type="inferred from homology"/>
<keyword id="KW-0963">Cytoplasm</keyword>
<keyword id="KW-0694">RNA-binding</keyword>
<reference key="1">
    <citation type="journal article" date="2003" name="Nature">
        <title>Genome divergence in two Prochlorococcus ecotypes reflects oceanic niche differentiation.</title>
        <authorList>
            <person name="Rocap G."/>
            <person name="Larimer F.W."/>
            <person name="Lamerdin J.E."/>
            <person name="Malfatti S."/>
            <person name="Chain P."/>
            <person name="Ahlgren N.A."/>
            <person name="Arellano A."/>
            <person name="Coleman M."/>
            <person name="Hauser L."/>
            <person name="Hess W.R."/>
            <person name="Johnson Z.I."/>
            <person name="Land M.L."/>
            <person name="Lindell D."/>
            <person name="Post A.F."/>
            <person name="Regala W."/>
            <person name="Shah M."/>
            <person name="Shaw S.L."/>
            <person name="Steglich C."/>
            <person name="Sullivan M.B."/>
            <person name="Ting C.S."/>
            <person name="Tolonen A."/>
            <person name="Webb E.A."/>
            <person name="Zinser E.R."/>
            <person name="Chisholm S.W."/>
        </authorList>
    </citation>
    <scope>NUCLEOTIDE SEQUENCE [LARGE SCALE GENOMIC DNA]</scope>
    <source>
        <strain>CCMP1986 / NIES-2087 / MED4</strain>
    </source>
</reference>
<dbReference type="EMBL" id="BX548174">
    <property type="protein sequence ID" value="CAE20075.1"/>
    <property type="molecule type" value="Genomic_DNA"/>
</dbReference>
<dbReference type="SMR" id="Q7UZP2"/>
<dbReference type="STRING" id="59919.PMM1616"/>
<dbReference type="KEGG" id="pmm:PMM1616"/>
<dbReference type="eggNOG" id="COG0691">
    <property type="taxonomic scope" value="Bacteria"/>
</dbReference>
<dbReference type="HOGENOM" id="CLU_108953_0_1_3"/>
<dbReference type="Proteomes" id="UP000001026">
    <property type="component" value="Chromosome"/>
</dbReference>
<dbReference type="GO" id="GO:0005829">
    <property type="term" value="C:cytosol"/>
    <property type="evidence" value="ECO:0007669"/>
    <property type="project" value="TreeGrafter"/>
</dbReference>
<dbReference type="GO" id="GO:0003723">
    <property type="term" value="F:RNA binding"/>
    <property type="evidence" value="ECO:0007669"/>
    <property type="project" value="UniProtKB-UniRule"/>
</dbReference>
<dbReference type="GO" id="GO:0070929">
    <property type="term" value="P:trans-translation"/>
    <property type="evidence" value="ECO:0007669"/>
    <property type="project" value="UniProtKB-UniRule"/>
</dbReference>
<dbReference type="CDD" id="cd09294">
    <property type="entry name" value="SmpB"/>
    <property type="match status" value="1"/>
</dbReference>
<dbReference type="Gene3D" id="2.40.280.10">
    <property type="match status" value="1"/>
</dbReference>
<dbReference type="HAMAP" id="MF_00023">
    <property type="entry name" value="SmpB"/>
    <property type="match status" value="1"/>
</dbReference>
<dbReference type="InterPro" id="IPR023620">
    <property type="entry name" value="SmpB"/>
</dbReference>
<dbReference type="InterPro" id="IPR000037">
    <property type="entry name" value="SsrA-bd_prot"/>
</dbReference>
<dbReference type="InterPro" id="IPR020081">
    <property type="entry name" value="SsrA-bd_prot_CS"/>
</dbReference>
<dbReference type="NCBIfam" id="NF003843">
    <property type="entry name" value="PRK05422.1"/>
    <property type="match status" value="1"/>
</dbReference>
<dbReference type="NCBIfam" id="TIGR00086">
    <property type="entry name" value="smpB"/>
    <property type="match status" value="1"/>
</dbReference>
<dbReference type="PANTHER" id="PTHR30308:SF2">
    <property type="entry name" value="SSRA-BINDING PROTEIN"/>
    <property type="match status" value="1"/>
</dbReference>
<dbReference type="PANTHER" id="PTHR30308">
    <property type="entry name" value="TMRNA-BINDING COMPONENT OF TRANS-TRANSLATION TAGGING COMPLEX"/>
    <property type="match status" value="1"/>
</dbReference>
<dbReference type="Pfam" id="PF01668">
    <property type="entry name" value="SmpB"/>
    <property type="match status" value="1"/>
</dbReference>
<dbReference type="SUPFAM" id="SSF74982">
    <property type="entry name" value="Small protein B (SmpB)"/>
    <property type="match status" value="1"/>
</dbReference>
<dbReference type="PROSITE" id="PS01317">
    <property type="entry name" value="SSRP"/>
    <property type="match status" value="1"/>
</dbReference>
<comment type="function">
    <text evidence="1">Required for rescue of stalled ribosomes mediated by trans-translation. Binds to transfer-messenger RNA (tmRNA), required for stable association of tmRNA with ribosomes. tmRNA and SmpB together mimic tRNA shape, replacing the anticodon stem-loop with SmpB. tmRNA is encoded by the ssrA gene; the 2 termini fold to resemble tRNA(Ala) and it encodes a 'tag peptide', a short internal open reading frame. During trans-translation Ala-aminoacylated tmRNA acts like a tRNA, entering the A-site of stalled ribosomes, displacing the stalled mRNA. The ribosome then switches to translate the ORF on the tmRNA; the nascent peptide is terminated with the 'tag peptide' encoded by the tmRNA and targeted for degradation. The ribosome is freed to recommence translation, which seems to be the essential function of trans-translation.</text>
</comment>
<comment type="subcellular location">
    <subcellularLocation>
        <location evidence="1">Cytoplasm</location>
    </subcellularLocation>
    <text evidence="1">The tmRNA-SmpB complex associates with stalled 70S ribosomes.</text>
</comment>
<comment type="similarity">
    <text evidence="1">Belongs to the SmpB family.</text>
</comment>
<evidence type="ECO:0000255" key="1">
    <source>
        <dbReference type="HAMAP-Rule" id="MF_00023"/>
    </source>
</evidence>
<name>SSRP_PROMP</name>
<organism>
    <name type="scientific">Prochlorococcus marinus subsp. pastoris (strain CCMP1986 / NIES-2087 / MED4)</name>
    <dbReference type="NCBI Taxonomy" id="59919"/>
    <lineage>
        <taxon>Bacteria</taxon>
        <taxon>Bacillati</taxon>
        <taxon>Cyanobacteriota</taxon>
        <taxon>Cyanophyceae</taxon>
        <taxon>Synechococcales</taxon>
        <taxon>Prochlorococcaceae</taxon>
        <taxon>Prochlorococcus</taxon>
    </lineage>
</organism>
<gene>
    <name evidence="1" type="primary">smpB</name>
    <name type="ordered locus">PMM1616</name>
</gene>
<sequence length="175" mass="20283">MFFGERFFTTAMAKVSNKANKIIKKEAVFKRLSENRYAKFQYEILETIEAGIELLGTEVKSIRNGSVNLRDGYCSFRDGEILLLNVHISPHKNVGPFFNHDPLRNRKLLLHKKEIVKLKYNTEKKGLTIIPLSIYLKGSWIKLTIGIGKGKKLHDKRQADKQRDIKREIKTALKR</sequence>
<accession>Q7UZP2</accession>
<feature type="chain" id="PRO_0000103007" description="SsrA-binding protein">
    <location>
        <begin position="1"/>
        <end position="175"/>
    </location>
</feature>